<evidence type="ECO:0000255" key="1"/>
<evidence type="ECO:0000256" key="2">
    <source>
        <dbReference type="SAM" id="MobiDB-lite"/>
    </source>
</evidence>
<evidence type="ECO:0000269" key="3">
    <source>
    </source>
</evidence>
<evidence type="ECO:0000305" key="4"/>
<proteinExistence type="predicted"/>
<sequence length="273" mass="31058">MGYEEAFFRWAFLIATVYVAYYFLVSSDKKLATKPQKSKLTKLGKQKQRQKQKNTKKDTLVNRETPSKKSQKLETSDALKSKSKDSSKKEPVVVPKKGTPKIFQENHKVKKVKSPKKEKLVGKNPAEKEDTTDVEDTQKLEQKHSTTPSSLKMKSSISLAAITADDSLHNSFSSNDIDDGFQTVTSSRSYGKKKSTEPLTKRQRQNQQKKLRAKEMQELADEEQRRRLAAHRKELHEANRPRGGLNNSSRSAYSYINNGQAGSSKGNRYDSLW</sequence>
<dbReference type="EMBL" id="CU329671">
    <property type="protein sequence ID" value="CAB89882.1"/>
    <property type="molecule type" value="Genomic_DNA"/>
</dbReference>
<dbReference type="RefSeq" id="NP_596262.1">
    <property type="nucleotide sequence ID" value="NM_001022182.2"/>
</dbReference>
<dbReference type="SMR" id="Q9P6R3"/>
<dbReference type="BioGRID" id="276476">
    <property type="interactions" value="13"/>
</dbReference>
<dbReference type="iPTMnet" id="Q9P6R3"/>
<dbReference type="PaxDb" id="4896-SPBC13E7.07.1"/>
<dbReference type="EnsemblFungi" id="SPBC13E7.07.1">
    <property type="protein sequence ID" value="SPBC13E7.07.1:pep"/>
    <property type="gene ID" value="SPBC13E7.07"/>
</dbReference>
<dbReference type="KEGG" id="spo:2539932"/>
<dbReference type="PomBase" id="SPBC13E7.07"/>
<dbReference type="VEuPathDB" id="FungiDB:SPBC13E7.07"/>
<dbReference type="HOGENOM" id="CLU_1019990_0_0_1"/>
<dbReference type="InParanoid" id="Q9P6R3"/>
<dbReference type="OMA" id="HRNELEM"/>
<dbReference type="PRO" id="PR:Q9P6R3"/>
<dbReference type="Proteomes" id="UP000002485">
    <property type="component" value="Chromosome II"/>
</dbReference>
<dbReference type="GO" id="GO:0005737">
    <property type="term" value="C:cytoplasm"/>
    <property type="evidence" value="ECO:0007005"/>
    <property type="project" value="PomBase"/>
</dbReference>
<dbReference type="GO" id="GO:0016020">
    <property type="term" value="C:membrane"/>
    <property type="evidence" value="ECO:0007669"/>
    <property type="project" value="UniProtKB-SubCell"/>
</dbReference>
<comment type="subcellular location">
    <subcellularLocation>
        <location evidence="3">Cytoplasm</location>
    </subcellularLocation>
    <subcellularLocation>
        <location evidence="4">Membrane</location>
        <topology evidence="4">Single-pass membrane protein</topology>
    </subcellularLocation>
</comment>
<name>YOH7_SCHPO</name>
<keyword id="KW-0963">Cytoplasm</keyword>
<keyword id="KW-0472">Membrane</keyword>
<keyword id="KW-1185">Reference proteome</keyword>
<keyword id="KW-0812">Transmembrane</keyword>
<keyword id="KW-1133">Transmembrane helix</keyword>
<organism>
    <name type="scientific">Schizosaccharomyces pombe (strain 972 / ATCC 24843)</name>
    <name type="common">Fission yeast</name>
    <dbReference type="NCBI Taxonomy" id="284812"/>
    <lineage>
        <taxon>Eukaryota</taxon>
        <taxon>Fungi</taxon>
        <taxon>Dikarya</taxon>
        <taxon>Ascomycota</taxon>
        <taxon>Taphrinomycotina</taxon>
        <taxon>Schizosaccharomycetes</taxon>
        <taxon>Schizosaccharomycetales</taxon>
        <taxon>Schizosaccharomycetaceae</taxon>
        <taxon>Schizosaccharomyces</taxon>
    </lineage>
</organism>
<protein>
    <recommendedName>
        <fullName>Uncharacterized protein C13E7.07</fullName>
    </recommendedName>
</protein>
<accession>Q9P6R3</accession>
<reference key="1">
    <citation type="journal article" date="2002" name="Nature">
        <title>The genome sequence of Schizosaccharomyces pombe.</title>
        <authorList>
            <person name="Wood V."/>
            <person name="Gwilliam R."/>
            <person name="Rajandream M.A."/>
            <person name="Lyne M.H."/>
            <person name="Lyne R."/>
            <person name="Stewart A."/>
            <person name="Sgouros J.G."/>
            <person name="Peat N."/>
            <person name="Hayles J."/>
            <person name="Baker S.G."/>
            <person name="Basham D."/>
            <person name="Bowman S."/>
            <person name="Brooks K."/>
            <person name="Brown D."/>
            <person name="Brown S."/>
            <person name="Chillingworth T."/>
            <person name="Churcher C.M."/>
            <person name="Collins M."/>
            <person name="Connor R."/>
            <person name="Cronin A."/>
            <person name="Davis P."/>
            <person name="Feltwell T."/>
            <person name="Fraser A."/>
            <person name="Gentles S."/>
            <person name="Goble A."/>
            <person name="Hamlin N."/>
            <person name="Harris D.E."/>
            <person name="Hidalgo J."/>
            <person name="Hodgson G."/>
            <person name="Holroyd S."/>
            <person name="Hornsby T."/>
            <person name="Howarth S."/>
            <person name="Huckle E.J."/>
            <person name="Hunt S."/>
            <person name="Jagels K."/>
            <person name="James K.D."/>
            <person name="Jones L."/>
            <person name="Jones M."/>
            <person name="Leather S."/>
            <person name="McDonald S."/>
            <person name="McLean J."/>
            <person name="Mooney P."/>
            <person name="Moule S."/>
            <person name="Mungall K.L."/>
            <person name="Murphy L.D."/>
            <person name="Niblett D."/>
            <person name="Odell C."/>
            <person name="Oliver K."/>
            <person name="O'Neil S."/>
            <person name="Pearson D."/>
            <person name="Quail M.A."/>
            <person name="Rabbinowitsch E."/>
            <person name="Rutherford K.M."/>
            <person name="Rutter S."/>
            <person name="Saunders D."/>
            <person name="Seeger K."/>
            <person name="Sharp S."/>
            <person name="Skelton J."/>
            <person name="Simmonds M.N."/>
            <person name="Squares R."/>
            <person name="Squares S."/>
            <person name="Stevens K."/>
            <person name="Taylor K."/>
            <person name="Taylor R.G."/>
            <person name="Tivey A."/>
            <person name="Walsh S.V."/>
            <person name="Warren T."/>
            <person name="Whitehead S."/>
            <person name="Woodward J.R."/>
            <person name="Volckaert G."/>
            <person name="Aert R."/>
            <person name="Robben J."/>
            <person name="Grymonprez B."/>
            <person name="Weltjens I."/>
            <person name="Vanstreels E."/>
            <person name="Rieger M."/>
            <person name="Schaefer M."/>
            <person name="Mueller-Auer S."/>
            <person name="Gabel C."/>
            <person name="Fuchs M."/>
            <person name="Duesterhoeft A."/>
            <person name="Fritzc C."/>
            <person name="Holzer E."/>
            <person name="Moestl D."/>
            <person name="Hilbert H."/>
            <person name="Borzym K."/>
            <person name="Langer I."/>
            <person name="Beck A."/>
            <person name="Lehrach H."/>
            <person name="Reinhardt R."/>
            <person name="Pohl T.M."/>
            <person name="Eger P."/>
            <person name="Zimmermann W."/>
            <person name="Wedler H."/>
            <person name="Wambutt R."/>
            <person name="Purnelle B."/>
            <person name="Goffeau A."/>
            <person name="Cadieu E."/>
            <person name="Dreano S."/>
            <person name="Gloux S."/>
            <person name="Lelaure V."/>
            <person name="Mottier S."/>
            <person name="Galibert F."/>
            <person name="Aves S.J."/>
            <person name="Xiang Z."/>
            <person name="Hunt C."/>
            <person name="Moore K."/>
            <person name="Hurst S.M."/>
            <person name="Lucas M."/>
            <person name="Rochet M."/>
            <person name="Gaillardin C."/>
            <person name="Tallada V.A."/>
            <person name="Garzon A."/>
            <person name="Thode G."/>
            <person name="Daga R.R."/>
            <person name="Cruzado L."/>
            <person name="Jimenez J."/>
            <person name="Sanchez M."/>
            <person name="del Rey F."/>
            <person name="Benito J."/>
            <person name="Dominguez A."/>
            <person name="Revuelta J.L."/>
            <person name="Moreno S."/>
            <person name="Armstrong J."/>
            <person name="Forsburg S.L."/>
            <person name="Cerutti L."/>
            <person name="Lowe T."/>
            <person name="McCombie W.R."/>
            <person name="Paulsen I."/>
            <person name="Potashkin J."/>
            <person name="Shpakovski G.V."/>
            <person name="Ussery D."/>
            <person name="Barrell B.G."/>
            <person name="Nurse P."/>
        </authorList>
    </citation>
    <scope>NUCLEOTIDE SEQUENCE [LARGE SCALE GENOMIC DNA]</scope>
    <source>
        <strain>972 / ATCC 24843</strain>
    </source>
</reference>
<reference key="2">
    <citation type="journal article" date="2006" name="Nat. Biotechnol.">
        <title>ORFeome cloning and global analysis of protein localization in the fission yeast Schizosaccharomyces pombe.</title>
        <authorList>
            <person name="Matsuyama A."/>
            <person name="Arai R."/>
            <person name="Yashiroda Y."/>
            <person name="Shirai A."/>
            <person name="Kamata A."/>
            <person name="Sekido S."/>
            <person name="Kobayashi Y."/>
            <person name="Hashimoto A."/>
            <person name="Hamamoto M."/>
            <person name="Hiraoka Y."/>
            <person name="Horinouchi S."/>
            <person name="Yoshida M."/>
        </authorList>
    </citation>
    <scope>SUBCELLULAR LOCATION [LARGE SCALE ANALYSIS]</scope>
</reference>
<gene>
    <name type="ORF">SPBC13E7.07</name>
</gene>
<feature type="chain" id="PRO_0000304037" description="Uncharacterized protein C13E7.07">
    <location>
        <begin position="1"/>
        <end position="273"/>
    </location>
</feature>
<feature type="transmembrane region" description="Helical" evidence="1">
    <location>
        <begin position="7"/>
        <end position="25"/>
    </location>
</feature>
<feature type="region of interest" description="Disordered" evidence="2">
    <location>
        <begin position="34"/>
        <end position="154"/>
    </location>
</feature>
<feature type="region of interest" description="Disordered" evidence="2">
    <location>
        <begin position="168"/>
        <end position="273"/>
    </location>
</feature>
<feature type="compositionally biased region" description="Basic residues" evidence="2">
    <location>
        <begin position="36"/>
        <end position="54"/>
    </location>
</feature>
<feature type="compositionally biased region" description="Basic and acidic residues" evidence="2">
    <location>
        <begin position="55"/>
        <end position="91"/>
    </location>
</feature>
<feature type="compositionally biased region" description="Low complexity" evidence="2">
    <location>
        <begin position="92"/>
        <end position="101"/>
    </location>
</feature>
<feature type="compositionally biased region" description="Basic and acidic residues" evidence="2">
    <location>
        <begin position="115"/>
        <end position="144"/>
    </location>
</feature>
<feature type="compositionally biased region" description="Polar residues" evidence="2">
    <location>
        <begin position="145"/>
        <end position="154"/>
    </location>
</feature>
<feature type="compositionally biased region" description="Basic residues" evidence="2">
    <location>
        <begin position="201"/>
        <end position="212"/>
    </location>
</feature>
<feature type="compositionally biased region" description="Basic and acidic residues" evidence="2">
    <location>
        <begin position="213"/>
        <end position="240"/>
    </location>
</feature>
<feature type="compositionally biased region" description="Polar residues" evidence="2">
    <location>
        <begin position="245"/>
        <end position="266"/>
    </location>
</feature>